<reference key="1">
    <citation type="journal article" date="1990" name="Development">
        <title>Molecular analysis of the Mov 34 mutation: transcript disrupted by proviral integration in mice is conserved in Drosophila.</title>
        <authorList>
            <person name="Gridley T."/>
            <person name="Gray D.A."/>
            <person name="Orr-Weaver T."/>
            <person name="Soriano P."/>
            <person name="Barton D.E."/>
            <person name="Francke U."/>
            <person name="Jaenisch R."/>
        </authorList>
    </citation>
    <scope>NUCLEOTIDE SEQUENCE [MRNA]</scope>
    <scope>DISEASE</scope>
</reference>
<reference key="2">
    <citation type="journal article" date="1991" name="Genomics">
        <title>The murine Mov-34 gene: full-length cDNA and genomic organization.</title>
        <authorList>
            <person name="Gridley T."/>
            <person name="Jaenisch R."/>
            <person name="Gendron-Maguire M."/>
        </authorList>
    </citation>
    <scope>NUCLEOTIDE SEQUENCE [GENOMIC DNA / MRNA]</scope>
</reference>
<reference key="3">
    <citation type="journal article" date="2005" name="Science">
        <title>The transcriptional landscape of the mammalian genome.</title>
        <authorList>
            <person name="Carninci P."/>
            <person name="Kasukawa T."/>
            <person name="Katayama S."/>
            <person name="Gough J."/>
            <person name="Frith M.C."/>
            <person name="Maeda N."/>
            <person name="Oyama R."/>
            <person name="Ravasi T."/>
            <person name="Lenhard B."/>
            <person name="Wells C."/>
            <person name="Kodzius R."/>
            <person name="Shimokawa K."/>
            <person name="Bajic V.B."/>
            <person name="Brenner S.E."/>
            <person name="Batalov S."/>
            <person name="Forrest A.R."/>
            <person name="Zavolan M."/>
            <person name="Davis M.J."/>
            <person name="Wilming L.G."/>
            <person name="Aidinis V."/>
            <person name="Allen J.E."/>
            <person name="Ambesi-Impiombato A."/>
            <person name="Apweiler R."/>
            <person name="Aturaliya R.N."/>
            <person name="Bailey T.L."/>
            <person name="Bansal M."/>
            <person name="Baxter L."/>
            <person name="Beisel K.W."/>
            <person name="Bersano T."/>
            <person name="Bono H."/>
            <person name="Chalk A.M."/>
            <person name="Chiu K.P."/>
            <person name="Choudhary V."/>
            <person name="Christoffels A."/>
            <person name="Clutterbuck D.R."/>
            <person name="Crowe M.L."/>
            <person name="Dalla E."/>
            <person name="Dalrymple B.P."/>
            <person name="de Bono B."/>
            <person name="Della Gatta G."/>
            <person name="di Bernardo D."/>
            <person name="Down T."/>
            <person name="Engstrom P."/>
            <person name="Fagiolini M."/>
            <person name="Faulkner G."/>
            <person name="Fletcher C.F."/>
            <person name="Fukushima T."/>
            <person name="Furuno M."/>
            <person name="Futaki S."/>
            <person name="Gariboldi M."/>
            <person name="Georgii-Hemming P."/>
            <person name="Gingeras T.R."/>
            <person name="Gojobori T."/>
            <person name="Green R.E."/>
            <person name="Gustincich S."/>
            <person name="Harbers M."/>
            <person name="Hayashi Y."/>
            <person name="Hensch T.K."/>
            <person name="Hirokawa N."/>
            <person name="Hill D."/>
            <person name="Huminiecki L."/>
            <person name="Iacono M."/>
            <person name="Ikeo K."/>
            <person name="Iwama A."/>
            <person name="Ishikawa T."/>
            <person name="Jakt M."/>
            <person name="Kanapin A."/>
            <person name="Katoh M."/>
            <person name="Kawasawa Y."/>
            <person name="Kelso J."/>
            <person name="Kitamura H."/>
            <person name="Kitano H."/>
            <person name="Kollias G."/>
            <person name="Krishnan S.P."/>
            <person name="Kruger A."/>
            <person name="Kummerfeld S.K."/>
            <person name="Kurochkin I.V."/>
            <person name="Lareau L.F."/>
            <person name="Lazarevic D."/>
            <person name="Lipovich L."/>
            <person name="Liu J."/>
            <person name="Liuni S."/>
            <person name="McWilliam S."/>
            <person name="Madan Babu M."/>
            <person name="Madera M."/>
            <person name="Marchionni L."/>
            <person name="Matsuda H."/>
            <person name="Matsuzawa S."/>
            <person name="Miki H."/>
            <person name="Mignone F."/>
            <person name="Miyake S."/>
            <person name="Morris K."/>
            <person name="Mottagui-Tabar S."/>
            <person name="Mulder N."/>
            <person name="Nakano N."/>
            <person name="Nakauchi H."/>
            <person name="Ng P."/>
            <person name="Nilsson R."/>
            <person name="Nishiguchi S."/>
            <person name="Nishikawa S."/>
            <person name="Nori F."/>
            <person name="Ohara O."/>
            <person name="Okazaki Y."/>
            <person name="Orlando V."/>
            <person name="Pang K.C."/>
            <person name="Pavan W.J."/>
            <person name="Pavesi G."/>
            <person name="Pesole G."/>
            <person name="Petrovsky N."/>
            <person name="Piazza S."/>
            <person name="Reed J."/>
            <person name="Reid J.F."/>
            <person name="Ring B.Z."/>
            <person name="Ringwald M."/>
            <person name="Rost B."/>
            <person name="Ruan Y."/>
            <person name="Salzberg S.L."/>
            <person name="Sandelin A."/>
            <person name="Schneider C."/>
            <person name="Schoenbach C."/>
            <person name="Sekiguchi K."/>
            <person name="Semple C.A."/>
            <person name="Seno S."/>
            <person name="Sessa L."/>
            <person name="Sheng Y."/>
            <person name="Shibata Y."/>
            <person name="Shimada H."/>
            <person name="Shimada K."/>
            <person name="Silva D."/>
            <person name="Sinclair B."/>
            <person name="Sperling S."/>
            <person name="Stupka E."/>
            <person name="Sugiura K."/>
            <person name="Sultana R."/>
            <person name="Takenaka Y."/>
            <person name="Taki K."/>
            <person name="Tammoja K."/>
            <person name="Tan S.L."/>
            <person name="Tang S."/>
            <person name="Taylor M.S."/>
            <person name="Tegner J."/>
            <person name="Teichmann S.A."/>
            <person name="Ueda H.R."/>
            <person name="van Nimwegen E."/>
            <person name="Verardo R."/>
            <person name="Wei C.L."/>
            <person name="Yagi K."/>
            <person name="Yamanishi H."/>
            <person name="Zabarovsky E."/>
            <person name="Zhu S."/>
            <person name="Zimmer A."/>
            <person name="Hide W."/>
            <person name="Bult C."/>
            <person name="Grimmond S.M."/>
            <person name="Teasdale R.D."/>
            <person name="Liu E.T."/>
            <person name="Brusic V."/>
            <person name="Quackenbush J."/>
            <person name="Wahlestedt C."/>
            <person name="Mattick J.S."/>
            <person name="Hume D.A."/>
            <person name="Kai C."/>
            <person name="Sasaki D."/>
            <person name="Tomaru Y."/>
            <person name="Fukuda S."/>
            <person name="Kanamori-Katayama M."/>
            <person name="Suzuki M."/>
            <person name="Aoki J."/>
            <person name="Arakawa T."/>
            <person name="Iida J."/>
            <person name="Imamura K."/>
            <person name="Itoh M."/>
            <person name="Kato T."/>
            <person name="Kawaji H."/>
            <person name="Kawagashira N."/>
            <person name="Kawashima T."/>
            <person name="Kojima M."/>
            <person name="Kondo S."/>
            <person name="Konno H."/>
            <person name="Nakano K."/>
            <person name="Ninomiya N."/>
            <person name="Nishio T."/>
            <person name="Okada M."/>
            <person name="Plessy C."/>
            <person name="Shibata K."/>
            <person name="Shiraki T."/>
            <person name="Suzuki S."/>
            <person name="Tagami M."/>
            <person name="Waki K."/>
            <person name="Watahiki A."/>
            <person name="Okamura-Oho Y."/>
            <person name="Suzuki H."/>
            <person name="Kawai J."/>
            <person name="Hayashizaki Y."/>
        </authorList>
    </citation>
    <scope>NUCLEOTIDE SEQUENCE [LARGE SCALE MRNA]</scope>
    <source>
        <strain>C57BL/6J</strain>
        <tissue>Thymus</tissue>
    </source>
</reference>
<reference key="4">
    <citation type="submission" date="2007-03" db="UniProtKB">
        <authorList>
            <person name="Lubec G."/>
            <person name="Klug S."/>
            <person name="Friebe K."/>
        </authorList>
    </citation>
    <scope>PROTEIN SEQUENCE OF 9-25 AND 154-177</scope>
    <scope>IDENTIFICATION BY MASS SPECTROMETRY</scope>
    <source>
        <tissue>Hippocampus</tissue>
    </source>
</reference>
<reference key="5">
    <citation type="journal article" date="2010" name="Cell">
        <title>A tissue-specific atlas of mouse protein phosphorylation and expression.</title>
        <authorList>
            <person name="Huttlin E.L."/>
            <person name="Jedrychowski M.P."/>
            <person name="Elias J.E."/>
            <person name="Goswami T."/>
            <person name="Rad R."/>
            <person name="Beausoleil S.A."/>
            <person name="Villen J."/>
            <person name="Haas W."/>
            <person name="Sowa M.E."/>
            <person name="Gygi S.P."/>
        </authorList>
    </citation>
    <scope>IDENTIFICATION BY MASS SPECTROMETRY [LARGE SCALE ANALYSIS]</scope>
    <source>
        <tissue>Brain</tissue>
        <tissue>Brown adipose tissue</tissue>
        <tissue>Heart</tissue>
        <tissue>Kidney</tissue>
        <tissue>Liver</tissue>
        <tissue>Lung</tissue>
        <tissue>Pancreas</tissue>
        <tissue>Spleen</tissue>
        <tissue>Testis</tissue>
    </source>
</reference>
<reference key="6">
    <citation type="journal article" date="2013" name="Proc. Natl. Acad. Sci. U.S.A.">
        <title>Label-free quantitative proteomics of the lysine acetylome in mitochondria identifies substrates of SIRT3 in metabolic pathways.</title>
        <authorList>
            <person name="Rardin M.J."/>
            <person name="Newman J.C."/>
            <person name="Held J.M."/>
            <person name="Cusack M.P."/>
            <person name="Sorensen D.J."/>
            <person name="Li B."/>
            <person name="Schilling B."/>
            <person name="Mooney S.D."/>
            <person name="Kahn C.R."/>
            <person name="Verdin E."/>
            <person name="Gibson B.W."/>
        </authorList>
    </citation>
    <scope>ACETYLATION [LARGE SCALE ANALYSIS] AT LYS-313 AND LYS-314</scope>
    <scope>IDENTIFICATION BY MASS SPECTROMETRY [LARGE SCALE ANALYSIS]</scope>
    <source>
        <tissue>Liver</tissue>
    </source>
</reference>
<evidence type="ECO:0000250" key="1">
    <source>
        <dbReference type="UniProtKB" id="P51665"/>
    </source>
</evidence>
<evidence type="ECO:0000255" key="2">
    <source>
        <dbReference type="PROSITE-ProRule" id="PRU01182"/>
    </source>
</evidence>
<evidence type="ECO:0000256" key="3">
    <source>
        <dbReference type="SAM" id="MobiDB-lite"/>
    </source>
</evidence>
<evidence type="ECO:0000305" key="4"/>
<evidence type="ECO:0000305" key="5">
    <source>
    </source>
</evidence>
<evidence type="ECO:0007744" key="6">
    <source>
    </source>
</evidence>
<proteinExistence type="evidence at protein level"/>
<accession>P26516</accession>
<accession>Q3TW61</accession>
<accession>Q8C0I8</accession>
<name>PSMD7_MOUSE</name>
<gene>
    <name type="primary">Psmd7</name>
    <name type="synonym">Mov-34</name>
    <name type="synonym">Mov34</name>
</gene>
<organism>
    <name type="scientific">Mus musculus</name>
    <name type="common">Mouse</name>
    <dbReference type="NCBI Taxonomy" id="10090"/>
    <lineage>
        <taxon>Eukaryota</taxon>
        <taxon>Metazoa</taxon>
        <taxon>Chordata</taxon>
        <taxon>Craniata</taxon>
        <taxon>Vertebrata</taxon>
        <taxon>Euteleostomi</taxon>
        <taxon>Mammalia</taxon>
        <taxon>Eutheria</taxon>
        <taxon>Euarchontoglires</taxon>
        <taxon>Glires</taxon>
        <taxon>Rodentia</taxon>
        <taxon>Myomorpha</taxon>
        <taxon>Muroidea</taxon>
        <taxon>Muridae</taxon>
        <taxon>Murinae</taxon>
        <taxon>Mus</taxon>
        <taxon>Mus</taxon>
    </lineage>
</organism>
<protein>
    <recommendedName>
        <fullName>26S proteasome non-ATPase regulatory subunit 7</fullName>
    </recommendedName>
    <alternativeName>
        <fullName>26S proteasome regulatory subunit RPN8</fullName>
    </alternativeName>
    <alternativeName>
        <fullName>26S proteasome regulatory subunit S12</fullName>
    </alternativeName>
    <alternativeName>
        <fullName>Mov34 protein</fullName>
    </alternativeName>
    <alternativeName>
        <fullName>Proteasome subunit p40</fullName>
    </alternativeName>
</protein>
<sequence length="321" mass="36540">MPELAVQKVVVHPLVLLSVVDHFNRIGKVGNQKRVVGVLLGSWQKKVLDVSNSFAVPFDEDDKDDSVWFLDHDYLENMYGMFKKVNARERIVGWYHTGPKLHKNDIAINELMKRYCPNSVLVIIDVKPKDLGLPTEAYISVEEVHDDGTPTSKTFEHVTSEIGAEEAEEVGVEHLLRDIKDTTVGTLSQRITNQVHGLKGLNSKLLDIRSYLEKVASGKLPINHQIIYQLQDVFNLLPDASLQEFVKAFYLKTNDQMVVVYLASLIRSVVALHNLINNKIANRDAEKKEGQEKEESKKERKDDKEKEKSDAAKKEEKKEKK</sequence>
<feature type="chain" id="PRO_0000213944" description="26S proteasome non-ATPase regulatory subunit 7">
    <location>
        <begin position="1"/>
        <end position="321"/>
    </location>
</feature>
<feature type="domain" description="MPN" evidence="2">
    <location>
        <begin position="9"/>
        <end position="144"/>
    </location>
</feature>
<feature type="region of interest" description="Disordered" evidence="3">
    <location>
        <begin position="281"/>
        <end position="321"/>
    </location>
</feature>
<feature type="modified residue" description="N6-acetyllysine" evidence="1">
    <location>
        <position position="204"/>
    </location>
</feature>
<feature type="modified residue" description="N6-acetyllysine" evidence="1">
    <location>
        <position position="214"/>
    </location>
</feature>
<feature type="modified residue" description="N6-acetyllysine" evidence="6">
    <location>
        <position position="313"/>
    </location>
</feature>
<feature type="modified residue" description="N6-acetyllysine" evidence="6">
    <location>
        <position position="314"/>
    </location>
</feature>
<feature type="cross-link" description="Glycyl lysine isopeptide (Lys-Gly) (interchain with G-Cter in ubiquitin)" evidence="1">
    <location>
        <position position="180"/>
    </location>
</feature>
<comment type="function">
    <text evidence="1">Component of the 26S proteasome, a multiprotein complex involved in the ATP-dependent degradation of ubiquitinated proteins. This complex plays a key role in the maintenance of protein homeostasis by removing misfolded or damaged proteins, which could impair cellular functions, and by removing proteins whose functions are no longer required. Therefore, the proteasome participates in numerous cellular processes, including cell cycle progression, apoptosis, or DNA damage repair.</text>
</comment>
<comment type="subunit">
    <text evidence="1">Component of the 19S proteasome regulatory particle complex. The 26S proteasome consists of a 20S core particle (CP) and two 19S regulatory subunits (RP). The regulatory particle is made of a lid composed of 9 subunits including PSMD7, a base containing 6 ATPases and few additional components. Within the complex, PSMD7 interacts with subunit PSMD4 through their respective MPN domain. Interacts with TRIM5.</text>
</comment>
<comment type="disease">
    <text evidence="5">Disruption of the Mov-34 locus is a recessive embryonic lethal mutation.</text>
</comment>
<comment type="miscellaneous">
    <text evidence="1">Does not bind a metal ion.</text>
</comment>
<comment type="similarity">
    <text evidence="4">Belongs to the peptidase M67A family.</text>
</comment>
<keyword id="KW-0007">Acetylation</keyword>
<keyword id="KW-0903">Direct protein sequencing</keyword>
<keyword id="KW-1017">Isopeptide bond</keyword>
<keyword id="KW-0647">Proteasome</keyword>
<keyword id="KW-1185">Reference proteome</keyword>
<keyword id="KW-0832">Ubl conjugation</keyword>
<dbReference type="EMBL" id="M64641">
    <property type="protein sequence ID" value="AAA39730.1"/>
    <property type="molecule type" value="mRNA"/>
</dbReference>
<dbReference type="EMBL" id="M64640">
    <property type="protein sequence ID" value="AAA39731.1"/>
    <property type="molecule type" value="Genomic_DNA"/>
</dbReference>
<dbReference type="EMBL" id="M64634">
    <property type="protein sequence ID" value="AAA39731.1"/>
    <property type="status" value="JOINED"/>
    <property type="molecule type" value="Genomic_DNA"/>
</dbReference>
<dbReference type="EMBL" id="M64635">
    <property type="protein sequence ID" value="AAA39731.1"/>
    <property type="status" value="JOINED"/>
    <property type="molecule type" value="Genomic_DNA"/>
</dbReference>
<dbReference type="EMBL" id="M64636">
    <property type="protein sequence ID" value="AAA39731.1"/>
    <property type="status" value="JOINED"/>
    <property type="molecule type" value="Genomic_DNA"/>
</dbReference>
<dbReference type="EMBL" id="M64637">
    <property type="protein sequence ID" value="AAA39731.1"/>
    <property type="status" value="JOINED"/>
    <property type="molecule type" value="Genomic_DNA"/>
</dbReference>
<dbReference type="EMBL" id="M64639">
    <property type="protein sequence ID" value="AAA39731.1"/>
    <property type="status" value="JOINED"/>
    <property type="molecule type" value="Genomic_DNA"/>
</dbReference>
<dbReference type="EMBL" id="AK031013">
    <property type="protein sequence ID" value="BAC27212.1"/>
    <property type="molecule type" value="mRNA"/>
</dbReference>
<dbReference type="EMBL" id="AK159825">
    <property type="protein sequence ID" value="BAE35405.1"/>
    <property type="molecule type" value="mRNA"/>
</dbReference>
<dbReference type="CCDS" id="CCDS22650.1"/>
<dbReference type="PIR" id="A40556">
    <property type="entry name" value="BWMSV4"/>
</dbReference>
<dbReference type="RefSeq" id="NP_034947.1">
    <property type="nucleotide sequence ID" value="NM_010817.2"/>
</dbReference>
<dbReference type="SMR" id="P26516"/>
<dbReference type="BioGRID" id="201472">
    <property type="interactions" value="58"/>
</dbReference>
<dbReference type="FunCoup" id="P26516">
    <property type="interactions" value="2926"/>
</dbReference>
<dbReference type="IntAct" id="P26516">
    <property type="interactions" value="2"/>
</dbReference>
<dbReference type="STRING" id="10090.ENSMUSP00000041968"/>
<dbReference type="MEROPS" id="M67.973"/>
<dbReference type="GlyGen" id="P26516">
    <property type="glycosylation" value="1 site, 1 O-linked glycan (1 site)"/>
</dbReference>
<dbReference type="iPTMnet" id="P26516"/>
<dbReference type="PhosphoSitePlus" id="P26516"/>
<dbReference type="SwissPalm" id="P26516"/>
<dbReference type="jPOST" id="P26516"/>
<dbReference type="PaxDb" id="10090-ENSMUSP00000041968"/>
<dbReference type="ProteomicsDB" id="291540"/>
<dbReference type="Pumba" id="P26516"/>
<dbReference type="Antibodypedia" id="30221">
    <property type="antibodies" value="328 antibodies from 33 providers"/>
</dbReference>
<dbReference type="DNASU" id="17463"/>
<dbReference type="Ensembl" id="ENSMUST00000044106.6">
    <property type="protein sequence ID" value="ENSMUSP00000041968.5"/>
    <property type="gene ID" value="ENSMUSG00000039067.6"/>
</dbReference>
<dbReference type="GeneID" id="17463"/>
<dbReference type="KEGG" id="mmu:17463"/>
<dbReference type="UCSC" id="uc009nhz.2">
    <property type="organism name" value="mouse"/>
</dbReference>
<dbReference type="AGR" id="MGI:1351511"/>
<dbReference type="CTD" id="5713"/>
<dbReference type="MGI" id="MGI:1351511">
    <property type="gene designation" value="Psmd7"/>
</dbReference>
<dbReference type="VEuPathDB" id="HostDB:ENSMUSG00000039067"/>
<dbReference type="eggNOG" id="KOG1556">
    <property type="taxonomic scope" value="Eukaryota"/>
</dbReference>
<dbReference type="GeneTree" id="ENSGT00950000183073"/>
<dbReference type="HOGENOM" id="CLU_027018_3_0_1"/>
<dbReference type="InParanoid" id="P26516"/>
<dbReference type="OMA" id="HAMSIKT"/>
<dbReference type="OrthoDB" id="10256771at2759"/>
<dbReference type="PhylomeDB" id="P26516"/>
<dbReference type="Reactome" id="R-MMU-1169091">
    <property type="pathway name" value="Activation of NF-kappaB in B cells"/>
</dbReference>
<dbReference type="Reactome" id="R-MMU-1234176">
    <property type="pathway name" value="Oxygen-dependent proline hydroxylation of Hypoxia-inducible Factor Alpha"/>
</dbReference>
<dbReference type="Reactome" id="R-MMU-1236978">
    <property type="pathway name" value="Cross-presentation of soluble exogenous antigens (endosomes)"/>
</dbReference>
<dbReference type="Reactome" id="R-MMU-174084">
    <property type="pathway name" value="Autodegradation of Cdh1 by Cdh1:APC/C"/>
</dbReference>
<dbReference type="Reactome" id="R-MMU-174154">
    <property type="pathway name" value="APC/C:Cdc20 mediated degradation of Securin"/>
</dbReference>
<dbReference type="Reactome" id="R-MMU-174178">
    <property type="pathway name" value="APC/C:Cdh1 mediated degradation of Cdc20 and other APC/C:Cdh1 targeted proteins in late mitosis/early G1"/>
</dbReference>
<dbReference type="Reactome" id="R-MMU-174184">
    <property type="pathway name" value="Cdc20:Phospho-APC/C mediated degradation of Cyclin A"/>
</dbReference>
<dbReference type="Reactome" id="R-MMU-187577">
    <property type="pathway name" value="SCF(Skp2)-mediated degradation of p27/p21"/>
</dbReference>
<dbReference type="Reactome" id="R-MMU-195253">
    <property type="pathway name" value="Degradation of beta-catenin by the destruction complex"/>
</dbReference>
<dbReference type="Reactome" id="R-MMU-202424">
    <property type="pathway name" value="Downstream TCR signaling"/>
</dbReference>
<dbReference type="Reactome" id="R-MMU-2467813">
    <property type="pathway name" value="Separation of Sister Chromatids"/>
</dbReference>
<dbReference type="Reactome" id="R-MMU-2871837">
    <property type="pathway name" value="FCERI mediated NF-kB activation"/>
</dbReference>
<dbReference type="Reactome" id="R-MMU-349425">
    <property type="pathway name" value="Autodegradation of the E3 ubiquitin ligase COP1"/>
</dbReference>
<dbReference type="Reactome" id="R-MMU-350562">
    <property type="pathway name" value="Regulation of ornithine decarboxylase (ODC)"/>
</dbReference>
<dbReference type="Reactome" id="R-MMU-382556">
    <property type="pathway name" value="ABC-family proteins mediated transport"/>
</dbReference>
<dbReference type="Reactome" id="R-MMU-450408">
    <property type="pathway name" value="AUF1 (hnRNP D0) binds and destabilizes mRNA"/>
</dbReference>
<dbReference type="Reactome" id="R-MMU-4608870">
    <property type="pathway name" value="Asymmetric localization of PCP proteins"/>
</dbReference>
<dbReference type="Reactome" id="R-MMU-4641257">
    <property type="pathway name" value="Degradation of AXIN"/>
</dbReference>
<dbReference type="Reactome" id="R-MMU-4641258">
    <property type="pathway name" value="Degradation of DVL"/>
</dbReference>
<dbReference type="Reactome" id="R-MMU-5358346">
    <property type="pathway name" value="Hedgehog ligand biogenesis"/>
</dbReference>
<dbReference type="Reactome" id="R-MMU-5607761">
    <property type="pathway name" value="Dectin-1 mediated noncanonical NF-kB signaling"/>
</dbReference>
<dbReference type="Reactome" id="R-MMU-5607764">
    <property type="pathway name" value="CLEC7A (Dectin-1) signaling"/>
</dbReference>
<dbReference type="Reactome" id="R-MMU-5610780">
    <property type="pathway name" value="Degradation of GLI1 by the proteasome"/>
</dbReference>
<dbReference type="Reactome" id="R-MMU-5610785">
    <property type="pathway name" value="GLI3 is processed to GLI3R by the proteasome"/>
</dbReference>
<dbReference type="Reactome" id="R-MMU-5632684">
    <property type="pathway name" value="Hedgehog 'on' state"/>
</dbReference>
<dbReference type="Reactome" id="R-MMU-5658442">
    <property type="pathway name" value="Regulation of RAS by GAPs"/>
</dbReference>
<dbReference type="Reactome" id="R-MMU-5668541">
    <property type="pathway name" value="TNFR2 non-canonical NF-kB pathway"/>
</dbReference>
<dbReference type="Reactome" id="R-MMU-5676590">
    <property type="pathway name" value="NIK--&gt;noncanonical NF-kB signaling"/>
</dbReference>
<dbReference type="Reactome" id="R-MMU-5687128">
    <property type="pathway name" value="MAPK6/MAPK4 signaling"/>
</dbReference>
<dbReference type="Reactome" id="R-MMU-5689603">
    <property type="pathway name" value="UCH proteinases"/>
</dbReference>
<dbReference type="Reactome" id="R-MMU-5689880">
    <property type="pathway name" value="Ub-specific processing proteases"/>
</dbReference>
<dbReference type="Reactome" id="R-MMU-6798695">
    <property type="pathway name" value="Neutrophil degranulation"/>
</dbReference>
<dbReference type="Reactome" id="R-MMU-68867">
    <property type="pathway name" value="Assembly of the pre-replicative complex"/>
</dbReference>
<dbReference type="Reactome" id="R-MMU-68949">
    <property type="pathway name" value="Orc1 removal from chromatin"/>
</dbReference>
<dbReference type="Reactome" id="R-MMU-69017">
    <property type="pathway name" value="CDK-mediated phosphorylation and removal of Cdc6"/>
</dbReference>
<dbReference type="Reactome" id="R-MMU-69481">
    <property type="pathway name" value="G2/M Checkpoints"/>
</dbReference>
<dbReference type="Reactome" id="R-MMU-69601">
    <property type="pathway name" value="Ubiquitin Mediated Degradation of Phosphorylated Cdc25A"/>
</dbReference>
<dbReference type="Reactome" id="R-MMU-75815">
    <property type="pathway name" value="Ubiquitin-dependent degradation of Cyclin D"/>
</dbReference>
<dbReference type="Reactome" id="R-MMU-8852276">
    <property type="pathway name" value="The role of GTSE1 in G2/M progression after G2 checkpoint"/>
</dbReference>
<dbReference type="Reactome" id="R-MMU-8854050">
    <property type="pathway name" value="FBXL7 down-regulates AURKA during mitotic entry and in early mitosis"/>
</dbReference>
<dbReference type="Reactome" id="R-MMU-8939236">
    <property type="pathway name" value="RUNX1 regulates transcription of genes involved in differentiation of HSCs"/>
</dbReference>
<dbReference type="Reactome" id="R-MMU-8939902">
    <property type="pathway name" value="Regulation of RUNX2 expression and activity"/>
</dbReference>
<dbReference type="Reactome" id="R-MMU-8941858">
    <property type="pathway name" value="Regulation of RUNX3 expression and activity"/>
</dbReference>
<dbReference type="Reactome" id="R-MMU-8948751">
    <property type="pathway name" value="Regulation of PTEN stability and activity"/>
</dbReference>
<dbReference type="Reactome" id="R-MMU-8951664">
    <property type="pathway name" value="Neddylation"/>
</dbReference>
<dbReference type="Reactome" id="R-MMU-9020702">
    <property type="pathway name" value="Interleukin-1 signaling"/>
</dbReference>
<dbReference type="Reactome" id="R-MMU-9755511">
    <property type="pathway name" value="KEAP1-NFE2L2 pathway"/>
</dbReference>
<dbReference type="Reactome" id="R-MMU-9762114">
    <property type="pathway name" value="GSK3B and BTRC:CUL1-mediated-degradation of NFE2L2"/>
</dbReference>
<dbReference type="Reactome" id="R-MMU-983168">
    <property type="pathway name" value="Antigen processing: Ubiquitination &amp; Proteasome degradation"/>
</dbReference>
<dbReference type="Reactome" id="R-MMU-9907900">
    <property type="pathway name" value="Proteasome assembly"/>
</dbReference>
<dbReference type="BioGRID-ORCS" id="17463">
    <property type="hits" value="26 hits in 77 CRISPR screens"/>
</dbReference>
<dbReference type="ChiTaRS" id="Psmd7">
    <property type="organism name" value="mouse"/>
</dbReference>
<dbReference type="PRO" id="PR:P26516"/>
<dbReference type="Proteomes" id="UP000000589">
    <property type="component" value="Chromosome 8"/>
</dbReference>
<dbReference type="RNAct" id="P26516">
    <property type="molecule type" value="protein"/>
</dbReference>
<dbReference type="Bgee" id="ENSMUSG00000039067">
    <property type="expression patterns" value="Expressed in hindlimb stylopod muscle and 261 other cell types or tissues"/>
</dbReference>
<dbReference type="ExpressionAtlas" id="P26516">
    <property type="expression patterns" value="baseline and differential"/>
</dbReference>
<dbReference type="GO" id="GO:0005838">
    <property type="term" value="C:proteasome regulatory particle"/>
    <property type="evidence" value="ECO:0000314"/>
    <property type="project" value="MGI"/>
</dbReference>
<dbReference type="GO" id="GO:0008237">
    <property type="term" value="F:metallopeptidase activity"/>
    <property type="evidence" value="ECO:0007669"/>
    <property type="project" value="InterPro"/>
</dbReference>
<dbReference type="GO" id="GO:0042803">
    <property type="term" value="F:protein homodimerization activity"/>
    <property type="evidence" value="ECO:0007669"/>
    <property type="project" value="Ensembl"/>
</dbReference>
<dbReference type="CDD" id="cd08062">
    <property type="entry name" value="MPN_RPN7_8"/>
    <property type="match status" value="1"/>
</dbReference>
<dbReference type="FunFam" id="3.40.140.10:FF:000009">
    <property type="entry name" value="26S proteasome non-ATPase regulatory subunit 7"/>
    <property type="match status" value="1"/>
</dbReference>
<dbReference type="Gene3D" id="3.40.140.10">
    <property type="entry name" value="Cytidine Deaminase, domain 2"/>
    <property type="match status" value="1"/>
</dbReference>
<dbReference type="InterPro" id="IPR024969">
    <property type="entry name" value="EIF3F/CSN6-like_C"/>
</dbReference>
<dbReference type="InterPro" id="IPR000555">
    <property type="entry name" value="JAMM/MPN+_dom"/>
</dbReference>
<dbReference type="InterPro" id="IPR037518">
    <property type="entry name" value="MPN"/>
</dbReference>
<dbReference type="InterPro" id="IPR033858">
    <property type="entry name" value="MPN_RPN7_8"/>
</dbReference>
<dbReference type="PANTHER" id="PTHR10540:SF7">
    <property type="entry name" value="26S PROTEASOME NON-ATPASE REGULATORY SUBUNIT 7"/>
    <property type="match status" value="1"/>
</dbReference>
<dbReference type="PANTHER" id="PTHR10540">
    <property type="entry name" value="EUKARYOTIC TRANSLATION INITIATION FACTOR 3 SUBUNIT F-RELATED"/>
    <property type="match status" value="1"/>
</dbReference>
<dbReference type="Pfam" id="PF01398">
    <property type="entry name" value="JAB"/>
    <property type="match status" value="1"/>
</dbReference>
<dbReference type="Pfam" id="PF13012">
    <property type="entry name" value="MitMem_reg"/>
    <property type="match status" value="1"/>
</dbReference>
<dbReference type="SMART" id="SM00232">
    <property type="entry name" value="JAB_MPN"/>
    <property type="match status" value="1"/>
</dbReference>
<dbReference type="PROSITE" id="PS50249">
    <property type="entry name" value="MPN"/>
    <property type="match status" value="1"/>
</dbReference>